<accession>P36236</accession>
<gene>
    <name evidence="1" type="primary">rplA</name>
    <name evidence="1" type="synonym">rpl1</name>
    <name type="ordered locus">sll1744</name>
</gene>
<keyword id="KW-1185">Reference proteome</keyword>
<keyword id="KW-0678">Repressor</keyword>
<keyword id="KW-0687">Ribonucleoprotein</keyword>
<keyword id="KW-0689">Ribosomal protein</keyword>
<keyword id="KW-0694">RNA-binding</keyword>
<keyword id="KW-0699">rRNA-binding</keyword>
<keyword id="KW-0810">Translation regulation</keyword>
<keyword id="KW-0820">tRNA-binding</keyword>
<proteinExistence type="inferred from homology"/>
<dbReference type="EMBL" id="X73005">
    <property type="protein sequence ID" value="CAA51492.1"/>
    <property type="molecule type" value="Genomic_DNA"/>
</dbReference>
<dbReference type="EMBL" id="BA000022">
    <property type="protein sequence ID" value="BAA17418.1"/>
    <property type="molecule type" value="Genomic_DNA"/>
</dbReference>
<dbReference type="PIR" id="D49316">
    <property type="entry name" value="D49316"/>
</dbReference>
<dbReference type="SMR" id="P36236"/>
<dbReference type="FunCoup" id="P36236">
    <property type="interactions" value="535"/>
</dbReference>
<dbReference type="STRING" id="1148.gene:10498281"/>
<dbReference type="PaxDb" id="1148-1652497"/>
<dbReference type="EnsemblBacteria" id="BAA17418">
    <property type="protein sequence ID" value="BAA17418"/>
    <property type="gene ID" value="BAA17418"/>
</dbReference>
<dbReference type="KEGG" id="syn:sll1744"/>
<dbReference type="eggNOG" id="COG0081">
    <property type="taxonomic scope" value="Bacteria"/>
</dbReference>
<dbReference type="InParanoid" id="P36236"/>
<dbReference type="PhylomeDB" id="P36236"/>
<dbReference type="Proteomes" id="UP000001425">
    <property type="component" value="Chromosome"/>
</dbReference>
<dbReference type="GO" id="GO:0015934">
    <property type="term" value="C:large ribosomal subunit"/>
    <property type="evidence" value="ECO:0007669"/>
    <property type="project" value="InterPro"/>
</dbReference>
<dbReference type="GO" id="GO:0019843">
    <property type="term" value="F:rRNA binding"/>
    <property type="evidence" value="ECO:0007669"/>
    <property type="project" value="UniProtKB-UniRule"/>
</dbReference>
<dbReference type="GO" id="GO:0003735">
    <property type="term" value="F:structural constituent of ribosome"/>
    <property type="evidence" value="ECO:0007669"/>
    <property type="project" value="InterPro"/>
</dbReference>
<dbReference type="GO" id="GO:0000049">
    <property type="term" value="F:tRNA binding"/>
    <property type="evidence" value="ECO:0007669"/>
    <property type="project" value="UniProtKB-KW"/>
</dbReference>
<dbReference type="GO" id="GO:0006417">
    <property type="term" value="P:regulation of translation"/>
    <property type="evidence" value="ECO:0007669"/>
    <property type="project" value="UniProtKB-KW"/>
</dbReference>
<dbReference type="GO" id="GO:0006412">
    <property type="term" value="P:translation"/>
    <property type="evidence" value="ECO:0007669"/>
    <property type="project" value="UniProtKB-UniRule"/>
</dbReference>
<dbReference type="CDD" id="cd00403">
    <property type="entry name" value="Ribosomal_L1"/>
    <property type="match status" value="1"/>
</dbReference>
<dbReference type="FunFam" id="3.40.50.790:FF:000001">
    <property type="entry name" value="50S ribosomal protein L1"/>
    <property type="match status" value="1"/>
</dbReference>
<dbReference type="Gene3D" id="3.30.190.20">
    <property type="match status" value="1"/>
</dbReference>
<dbReference type="Gene3D" id="3.40.50.790">
    <property type="match status" value="1"/>
</dbReference>
<dbReference type="HAMAP" id="MF_01318_B">
    <property type="entry name" value="Ribosomal_uL1_B"/>
    <property type="match status" value="1"/>
</dbReference>
<dbReference type="InterPro" id="IPR005878">
    <property type="entry name" value="Ribosom_uL1_bac-type"/>
</dbReference>
<dbReference type="InterPro" id="IPR002143">
    <property type="entry name" value="Ribosomal_uL1"/>
</dbReference>
<dbReference type="InterPro" id="IPR023674">
    <property type="entry name" value="Ribosomal_uL1-like"/>
</dbReference>
<dbReference type="InterPro" id="IPR028364">
    <property type="entry name" value="Ribosomal_uL1/biogenesis"/>
</dbReference>
<dbReference type="InterPro" id="IPR016095">
    <property type="entry name" value="Ribosomal_uL1_3-a/b-sand"/>
</dbReference>
<dbReference type="InterPro" id="IPR023673">
    <property type="entry name" value="Ribosomal_uL1_CS"/>
</dbReference>
<dbReference type="NCBIfam" id="TIGR01169">
    <property type="entry name" value="rplA_bact"/>
    <property type="match status" value="1"/>
</dbReference>
<dbReference type="PANTHER" id="PTHR36427">
    <property type="entry name" value="54S RIBOSOMAL PROTEIN L1, MITOCHONDRIAL"/>
    <property type="match status" value="1"/>
</dbReference>
<dbReference type="PANTHER" id="PTHR36427:SF3">
    <property type="entry name" value="LARGE RIBOSOMAL SUBUNIT PROTEIN UL1M"/>
    <property type="match status" value="1"/>
</dbReference>
<dbReference type="Pfam" id="PF00687">
    <property type="entry name" value="Ribosomal_L1"/>
    <property type="match status" value="1"/>
</dbReference>
<dbReference type="PIRSF" id="PIRSF002155">
    <property type="entry name" value="Ribosomal_L1"/>
    <property type="match status" value="1"/>
</dbReference>
<dbReference type="SUPFAM" id="SSF56808">
    <property type="entry name" value="Ribosomal protein L1"/>
    <property type="match status" value="1"/>
</dbReference>
<dbReference type="PROSITE" id="PS01199">
    <property type="entry name" value="RIBOSOMAL_L1"/>
    <property type="match status" value="1"/>
</dbReference>
<reference key="1">
    <citation type="journal article" date="1993" name="J. Biol. Chem.">
        <title>A novel operon organization involving the genes for chorismate synthase (aromatic biosynthesis pathway) and ribosomal GTPase center proteins (L11, L1, L10, L12: rplKAJL) in cyanobacterium Synechocystis PCC 6803.</title>
        <authorList>
            <person name="Schmidt J."/>
            <person name="Bubunenko M."/>
            <person name="Subramanian A.R."/>
        </authorList>
    </citation>
    <scope>NUCLEOTIDE SEQUENCE [GENOMIC DNA]</scope>
</reference>
<reference key="2">
    <citation type="journal article" date="1996" name="DNA Res.">
        <title>Sequence analysis of the genome of the unicellular cyanobacterium Synechocystis sp. strain PCC6803. II. Sequence determination of the entire genome and assignment of potential protein-coding regions.</title>
        <authorList>
            <person name="Kaneko T."/>
            <person name="Sato S."/>
            <person name="Kotani H."/>
            <person name="Tanaka A."/>
            <person name="Asamizu E."/>
            <person name="Nakamura Y."/>
            <person name="Miyajima N."/>
            <person name="Hirosawa M."/>
            <person name="Sugiura M."/>
            <person name="Sasamoto S."/>
            <person name="Kimura T."/>
            <person name="Hosouchi T."/>
            <person name="Matsuno A."/>
            <person name="Muraki A."/>
            <person name="Nakazaki N."/>
            <person name="Naruo K."/>
            <person name="Okumura S."/>
            <person name="Shimpo S."/>
            <person name="Takeuchi C."/>
            <person name="Wada T."/>
            <person name="Watanabe A."/>
            <person name="Yamada M."/>
            <person name="Yasuda M."/>
            <person name="Tabata S."/>
        </authorList>
    </citation>
    <scope>NUCLEOTIDE SEQUENCE [LARGE SCALE GENOMIC DNA]</scope>
    <source>
        <strain>ATCC 27184 / PCC 6803 / Kazusa</strain>
    </source>
</reference>
<name>RL1_SYNY3</name>
<evidence type="ECO:0000255" key="1">
    <source>
        <dbReference type="HAMAP-Rule" id="MF_01318"/>
    </source>
</evidence>
<evidence type="ECO:0000305" key="2"/>
<protein>
    <recommendedName>
        <fullName evidence="1">Large ribosomal subunit protein uL1</fullName>
    </recommendedName>
    <alternativeName>
        <fullName evidence="2">50S ribosomal protein L1</fullName>
    </alternativeName>
</protein>
<feature type="chain" id="PRO_0000125761" description="Large ribosomal subunit protein uL1">
    <location>
        <begin position="1"/>
        <end position="238"/>
    </location>
</feature>
<organism>
    <name type="scientific">Synechocystis sp. (strain ATCC 27184 / PCC 6803 / Kazusa)</name>
    <dbReference type="NCBI Taxonomy" id="1111708"/>
    <lineage>
        <taxon>Bacteria</taxon>
        <taxon>Bacillati</taxon>
        <taxon>Cyanobacteriota</taxon>
        <taxon>Cyanophyceae</taxon>
        <taxon>Synechococcales</taxon>
        <taxon>Merismopediaceae</taxon>
        <taxon>Synechocystis</taxon>
    </lineage>
</organism>
<sequence>MTKKLSKRMQAAIAKVDDSKLYSPLEAMELLKETATAKFDETAEAHIRLGIDPKYSDQQIRTTVSLPKGTGQTVRVAVLARGEKVKEATDAGADIAGSEELIEEIQKGMMDFDVLIATPDMMPKIARLGKQLGPRGLMPSPKGGTVTADLAAAVNEFKAGKLEFRADRTGIVHVMFGKASFSADDLLANLKALQETIDRNRPSGAKGRFWRTVFVSSSMGPSIPVDINALRDLKFEDN</sequence>
<comment type="function">
    <text evidence="1">Binds directly to 23S rRNA. The L1 stalk is quite mobile in the ribosome, and is involved in E site tRNA release.</text>
</comment>
<comment type="function">
    <text evidence="1">Protein L1 is also a translational repressor protein, it controls the translation of the L11 operon by binding to its mRNA.</text>
</comment>
<comment type="subunit">
    <text evidence="1">Part of the 50S ribosomal subunit.</text>
</comment>
<comment type="similarity">
    <text evidence="1">Belongs to the universal ribosomal protein uL1 family.</text>
</comment>